<evidence type="ECO:0000255" key="1">
    <source>
        <dbReference type="HAMAP-Rule" id="MF_00558"/>
    </source>
</evidence>
<protein>
    <recommendedName>
        <fullName evidence="1">Succinate--CoA ligase [ADP-forming] subunit beta</fullName>
        <ecNumber evidence="1">6.2.1.5</ecNumber>
    </recommendedName>
    <alternativeName>
        <fullName evidence="1">Succinyl-CoA synthetase subunit beta</fullName>
        <shortName evidence="1">SCS-beta</shortName>
    </alternativeName>
</protein>
<reference key="1">
    <citation type="submission" date="2006-12" db="EMBL/GenBank/DDBJ databases">
        <title>Complete sequence of Halorhodospira halophila SL1.</title>
        <authorList>
            <consortium name="US DOE Joint Genome Institute"/>
            <person name="Copeland A."/>
            <person name="Lucas S."/>
            <person name="Lapidus A."/>
            <person name="Barry K."/>
            <person name="Detter J.C."/>
            <person name="Glavina del Rio T."/>
            <person name="Hammon N."/>
            <person name="Israni S."/>
            <person name="Dalin E."/>
            <person name="Tice H."/>
            <person name="Pitluck S."/>
            <person name="Saunders E."/>
            <person name="Brettin T."/>
            <person name="Bruce D."/>
            <person name="Han C."/>
            <person name="Tapia R."/>
            <person name="Schmutz J."/>
            <person name="Larimer F."/>
            <person name="Land M."/>
            <person name="Hauser L."/>
            <person name="Kyrpides N."/>
            <person name="Mikhailova N."/>
            <person name="Hoff W."/>
            <person name="Richardson P."/>
        </authorList>
    </citation>
    <scope>NUCLEOTIDE SEQUENCE [LARGE SCALE GENOMIC DNA]</scope>
    <source>
        <strain>DSM 244 / SL1</strain>
    </source>
</reference>
<proteinExistence type="inferred from homology"/>
<accession>A1WZ92</accession>
<sequence>MNLHEFQAKHLFTEAGIAIPRGYVARSSAEARAAAERLGGSAWVVKAQVHAGGRGKAGGVRVIQEGDEIERYADSLLGERLVTHQTDGRGQPIHALLVEEGLEIARELYLGALVDRASQRVVFMVSAAGGMDIEEVAASEPERIHTVRVHPAAGLQPYQCRQLGFALGLDKAQVGDLTRMMQGLYRLFLERDLSLVEINPLIVTGEGRLLALDAKVTVDDNAVEIGRQSQIQDMRDLTQEDETEVRAAEHNLNYITLDGNIGCMVNGAGLAMATMDVIKLHGGAPANFLDVGGGTNAERVAEAFKIILSSPSVEGILVNIFGGIVRCDMIAEGIVAAVQDVGVEVPVVVRLEGTNVEQGKQILADSGLDLIPADDLADAAAKIVDIAGQVA</sequence>
<gene>
    <name evidence="1" type="primary">sucC</name>
    <name type="ordered locus">Hhal_2240</name>
</gene>
<comment type="function">
    <text evidence="1">Succinyl-CoA synthetase functions in the citric acid cycle (TCA), coupling the hydrolysis of succinyl-CoA to the synthesis of either ATP or GTP and thus represents the only step of substrate-level phosphorylation in the TCA. The beta subunit provides nucleotide specificity of the enzyme and binds the substrate succinate, while the binding sites for coenzyme A and phosphate are found in the alpha subunit.</text>
</comment>
<comment type="catalytic activity">
    <reaction evidence="1">
        <text>succinate + ATP + CoA = succinyl-CoA + ADP + phosphate</text>
        <dbReference type="Rhea" id="RHEA:17661"/>
        <dbReference type="ChEBI" id="CHEBI:30031"/>
        <dbReference type="ChEBI" id="CHEBI:30616"/>
        <dbReference type="ChEBI" id="CHEBI:43474"/>
        <dbReference type="ChEBI" id="CHEBI:57287"/>
        <dbReference type="ChEBI" id="CHEBI:57292"/>
        <dbReference type="ChEBI" id="CHEBI:456216"/>
        <dbReference type="EC" id="6.2.1.5"/>
    </reaction>
    <physiologicalReaction direction="right-to-left" evidence="1">
        <dbReference type="Rhea" id="RHEA:17663"/>
    </physiologicalReaction>
</comment>
<comment type="catalytic activity">
    <reaction evidence="1">
        <text>GTP + succinate + CoA = succinyl-CoA + GDP + phosphate</text>
        <dbReference type="Rhea" id="RHEA:22120"/>
        <dbReference type="ChEBI" id="CHEBI:30031"/>
        <dbReference type="ChEBI" id="CHEBI:37565"/>
        <dbReference type="ChEBI" id="CHEBI:43474"/>
        <dbReference type="ChEBI" id="CHEBI:57287"/>
        <dbReference type="ChEBI" id="CHEBI:57292"/>
        <dbReference type="ChEBI" id="CHEBI:58189"/>
    </reaction>
    <physiologicalReaction direction="right-to-left" evidence="1">
        <dbReference type="Rhea" id="RHEA:22122"/>
    </physiologicalReaction>
</comment>
<comment type="cofactor">
    <cofactor evidence="1">
        <name>Mg(2+)</name>
        <dbReference type="ChEBI" id="CHEBI:18420"/>
    </cofactor>
    <text evidence="1">Binds 1 Mg(2+) ion per subunit.</text>
</comment>
<comment type="pathway">
    <text evidence="1">Carbohydrate metabolism; tricarboxylic acid cycle; succinate from succinyl-CoA (ligase route): step 1/1.</text>
</comment>
<comment type="subunit">
    <text evidence="1">Heterotetramer of two alpha and two beta subunits.</text>
</comment>
<comment type="similarity">
    <text evidence="1">Belongs to the succinate/malate CoA ligase beta subunit family.</text>
</comment>
<keyword id="KW-0067">ATP-binding</keyword>
<keyword id="KW-0436">Ligase</keyword>
<keyword id="KW-0460">Magnesium</keyword>
<keyword id="KW-0479">Metal-binding</keyword>
<keyword id="KW-0547">Nucleotide-binding</keyword>
<keyword id="KW-1185">Reference proteome</keyword>
<keyword id="KW-0816">Tricarboxylic acid cycle</keyword>
<feature type="chain" id="PRO_1000082103" description="Succinate--CoA ligase [ADP-forming] subunit beta">
    <location>
        <begin position="1"/>
        <end position="391"/>
    </location>
</feature>
<feature type="domain" description="ATP-grasp" evidence="1">
    <location>
        <begin position="9"/>
        <end position="246"/>
    </location>
</feature>
<feature type="binding site" evidence="1">
    <location>
        <position position="46"/>
    </location>
    <ligand>
        <name>ATP</name>
        <dbReference type="ChEBI" id="CHEBI:30616"/>
    </ligand>
</feature>
<feature type="binding site" evidence="1">
    <location>
        <begin position="53"/>
        <end position="55"/>
    </location>
    <ligand>
        <name>ATP</name>
        <dbReference type="ChEBI" id="CHEBI:30616"/>
    </ligand>
</feature>
<feature type="binding site" evidence="1">
    <location>
        <position position="99"/>
    </location>
    <ligand>
        <name>ATP</name>
        <dbReference type="ChEBI" id="CHEBI:30616"/>
    </ligand>
</feature>
<feature type="binding site" evidence="1">
    <location>
        <position position="102"/>
    </location>
    <ligand>
        <name>ATP</name>
        <dbReference type="ChEBI" id="CHEBI:30616"/>
    </ligand>
</feature>
<feature type="binding site" evidence="1">
    <location>
        <position position="107"/>
    </location>
    <ligand>
        <name>ATP</name>
        <dbReference type="ChEBI" id="CHEBI:30616"/>
    </ligand>
</feature>
<feature type="binding site" evidence="1">
    <location>
        <position position="199"/>
    </location>
    <ligand>
        <name>Mg(2+)</name>
        <dbReference type="ChEBI" id="CHEBI:18420"/>
    </ligand>
</feature>
<feature type="binding site" evidence="1">
    <location>
        <position position="213"/>
    </location>
    <ligand>
        <name>Mg(2+)</name>
        <dbReference type="ChEBI" id="CHEBI:18420"/>
    </ligand>
</feature>
<feature type="binding site" evidence="1">
    <location>
        <position position="266"/>
    </location>
    <ligand>
        <name>substrate</name>
        <note>ligand shared with subunit alpha</note>
    </ligand>
</feature>
<feature type="binding site" evidence="1">
    <location>
        <begin position="323"/>
        <end position="325"/>
    </location>
    <ligand>
        <name>substrate</name>
        <note>ligand shared with subunit alpha</note>
    </ligand>
</feature>
<name>SUCC_HALHL</name>
<organism>
    <name type="scientific">Halorhodospira halophila (strain DSM 244 / SL1)</name>
    <name type="common">Ectothiorhodospira halophila (strain DSM 244 / SL1)</name>
    <dbReference type="NCBI Taxonomy" id="349124"/>
    <lineage>
        <taxon>Bacteria</taxon>
        <taxon>Pseudomonadati</taxon>
        <taxon>Pseudomonadota</taxon>
        <taxon>Gammaproteobacteria</taxon>
        <taxon>Chromatiales</taxon>
        <taxon>Ectothiorhodospiraceae</taxon>
        <taxon>Halorhodospira</taxon>
    </lineage>
</organism>
<dbReference type="EC" id="6.2.1.5" evidence="1"/>
<dbReference type="EMBL" id="CP000544">
    <property type="protein sequence ID" value="ABM63004.1"/>
    <property type="molecule type" value="Genomic_DNA"/>
</dbReference>
<dbReference type="RefSeq" id="WP_011815026.1">
    <property type="nucleotide sequence ID" value="NC_008789.1"/>
</dbReference>
<dbReference type="SMR" id="A1WZ92"/>
<dbReference type="STRING" id="349124.Hhal_2240"/>
<dbReference type="KEGG" id="hha:Hhal_2240"/>
<dbReference type="eggNOG" id="COG0045">
    <property type="taxonomic scope" value="Bacteria"/>
</dbReference>
<dbReference type="HOGENOM" id="CLU_037430_0_2_6"/>
<dbReference type="OrthoDB" id="9802602at2"/>
<dbReference type="UniPathway" id="UPA00223">
    <property type="reaction ID" value="UER00999"/>
</dbReference>
<dbReference type="Proteomes" id="UP000000647">
    <property type="component" value="Chromosome"/>
</dbReference>
<dbReference type="GO" id="GO:0005829">
    <property type="term" value="C:cytosol"/>
    <property type="evidence" value="ECO:0007669"/>
    <property type="project" value="TreeGrafter"/>
</dbReference>
<dbReference type="GO" id="GO:0042709">
    <property type="term" value="C:succinate-CoA ligase complex"/>
    <property type="evidence" value="ECO:0007669"/>
    <property type="project" value="TreeGrafter"/>
</dbReference>
<dbReference type="GO" id="GO:0005524">
    <property type="term" value="F:ATP binding"/>
    <property type="evidence" value="ECO:0007669"/>
    <property type="project" value="UniProtKB-UniRule"/>
</dbReference>
<dbReference type="GO" id="GO:0000287">
    <property type="term" value="F:magnesium ion binding"/>
    <property type="evidence" value="ECO:0007669"/>
    <property type="project" value="UniProtKB-UniRule"/>
</dbReference>
<dbReference type="GO" id="GO:0004775">
    <property type="term" value="F:succinate-CoA ligase (ADP-forming) activity"/>
    <property type="evidence" value="ECO:0007669"/>
    <property type="project" value="UniProtKB-UniRule"/>
</dbReference>
<dbReference type="GO" id="GO:0004776">
    <property type="term" value="F:succinate-CoA ligase (GDP-forming) activity"/>
    <property type="evidence" value="ECO:0007669"/>
    <property type="project" value="RHEA"/>
</dbReference>
<dbReference type="GO" id="GO:0006104">
    <property type="term" value="P:succinyl-CoA metabolic process"/>
    <property type="evidence" value="ECO:0007669"/>
    <property type="project" value="TreeGrafter"/>
</dbReference>
<dbReference type="GO" id="GO:0006099">
    <property type="term" value="P:tricarboxylic acid cycle"/>
    <property type="evidence" value="ECO:0007669"/>
    <property type="project" value="UniProtKB-UniRule"/>
</dbReference>
<dbReference type="FunFam" id="3.30.1490.20:FF:000002">
    <property type="entry name" value="Succinate--CoA ligase [ADP-forming] subunit beta"/>
    <property type="match status" value="1"/>
</dbReference>
<dbReference type="FunFam" id="3.30.470.20:FF:000002">
    <property type="entry name" value="Succinate--CoA ligase [ADP-forming] subunit beta"/>
    <property type="match status" value="1"/>
</dbReference>
<dbReference type="FunFam" id="3.40.50.261:FF:000001">
    <property type="entry name" value="Succinate--CoA ligase [ADP-forming] subunit beta"/>
    <property type="match status" value="1"/>
</dbReference>
<dbReference type="Gene3D" id="3.30.1490.20">
    <property type="entry name" value="ATP-grasp fold, A domain"/>
    <property type="match status" value="1"/>
</dbReference>
<dbReference type="Gene3D" id="3.30.470.20">
    <property type="entry name" value="ATP-grasp fold, B domain"/>
    <property type="match status" value="1"/>
</dbReference>
<dbReference type="Gene3D" id="3.40.50.261">
    <property type="entry name" value="Succinyl-CoA synthetase domains"/>
    <property type="match status" value="1"/>
</dbReference>
<dbReference type="HAMAP" id="MF_00558">
    <property type="entry name" value="Succ_CoA_beta"/>
    <property type="match status" value="1"/>
</dbReference>
<dbReference type="InterPro" id="IPR011761">
    <property type="entry name" value="ATP-grasp"/>
</dbReference>
<dbReference type="InterPro" id="IPR013650">
    <property type="entry name" value="ATP-grasp_succ-CoA_synth-type"/>
</dbReference>
<dbReference type="InterPro" id="IPR013815">
    <property type="entry name" value="ATP_grasp_subdomain_1"/>
</dbReference>
<dbReference type="InterPro" id="IPR017866">
    <property type="entry name" value="Succ-CoA_synthase_bsu_CS"/>
</dbReference>
<dbReference type="InterPro" id="IPR005811">
    <property type="entry name" value="SUCC_ACL_C"/>
</dbReference>
<dbReference type="InterPro" id="IPR005809">
    <property type="entry name" value="Succ_CoA_ligase-like_bsu"/>
</dbReference>
<dbReference type="InterPro" id="IPR016102">
    <property type="entry name" value="Succinyl-CoA_synth-like"/>
</dbReference>
<dbReference type="NCBIfam" id="NF001913">
    <property type="entry name" value="PRK00696.1"/>
    <property type="match status" value="1"/>
</dbReference>
<dbReference type="NCBIfam" id="TIGR01016">
    <property type="entry name" value="sucCoAbeta"/>
    <property type="match status" value="1"/>
</dbReference>
<dbReference type="PANTHER" id="PTHR11815:SF10">
    <property type="entry name" value="SUCCINATE--COA LIGASE [GDP-FORMING] SUBUNIT BETA, MITOCHONDRIAL"/>
    <property type="match status" value="1"/>
</dbReference>
<dbReference type="PANTHER" id="PTHR11815">
    <property type="entry name" value="SUCCINYL-COA SYNTHETASE BETA CHAIN"/>
    <property type="match status" value="1"/>
</dbReference>
<dbReference type="Pfam" id="PF08442">
    <property type="entry name" value="ATP-grasp_2"/>
    <property type="match status" value="1"/>
</dbReference>
<dbReference type="Pfam" id="PF00549">
    <property type="entry name" value="Ligase_CoA"/>
    <property type="match status" value="1"/>
</dbReference>
<dbReference type="PIRSF" id="PIRSF001554">
    <property type="entry name" value="SucCS_beta"/>
    <property type="match status" value="1"/>
</dbReference>
<dbReference type="SUPFAM" id="SSF56059">
    <property type="entry name" value="Glutathione synthetase ATP-binding domain-like"/>
    <property type="match status" value="1"/>
</dbReference>
<dbReference type="SUPFAM" id="SSF52210">
    <property type="entry name" value="Succinyl-CoA synthetase domains"/>
    <property type="match status" value="1"/>
</dbReference>
<dbReference type="PROSITE" id="PS50975">
    <property type="entry name" value="ATP_GRASP"/>
    <property type="match status" value="1"/>
</dbReference>
<dbReference type="PROSITE" id="PS01217">
    <property type="entry name" value="SUCCINYL_COA_LIG_3"/>
    <property type="match status" value="1"/>
</dbReference>